<gene>
    <name type="primary">fabG</name>
    <name type="ordered locus">RBE_0116</name>
</gene>
<feature type="chain" id="PRO_0000286631" description="3-oxoacyl-[acyl-carrier-protein] reductase FabG">
    <location>
        <begin position="1"/>
        <end position="241"/>
    </location>
</feature>
<feature type="active site" description="Proton acceptor" evidence="2">
    <location>
        <position position="148"/>
    </location>
</feature>
<feature type="binding site" evidence="1">
    <location>
        <begin position="13"/>
        <end position="16"/>
    </location>
    <ligand>
        <name>NADP(+)</name>
        <dbReference type="ChEBI" id="CHEBI:58349"/>
    </ligand>
</feature>
<feature type="binding site" evidence="1">
    <location>
        <position position="38"/>
    </location>
    <ligand>
        <name>NADP(+)</name>
        <dbReference type="ChEBI" id="CHEBI:58349"/>
    </ligand>
</feature>
<feature type="binding site" evidence="1">
    <location>
        <begin position="57"/>
        <end position="58"/>
    </location>
    <ligand>
        <name>NADP(+)</name>
        <dbReference type="ChEBI" id="CHEBI:58349"/>
    </ligand>
</feature>
<feature type="binding site" evidence="1">
    <location>
        <position position="83"/>
    </location>
    <ligand>
        <name>NADP(+)</name>
        <dbReference type="ChEBI" id="CHEBI:58349"/>
    </ligand>
</feature>
<feature type="binding site" evidence="1">
    <location>
        <position position="135"/>
    </location>
    <ligand>
        <name>substrate</name>
    </ligand>
</feature>
<feature type="binding site" evidence="1">
    <location>
        <begin position="148"/>
        <end position="152"/>
    </location>
    <ligand>
        <name>NADP(+)</name>
        <dbReference type="ChEBI" id="CHEBI:58349"/>
    </ligand>
</feature>
<feature type="binding site" evidence="1">
    <location>
        <position position="181"/>
    </location>
    <ligand>
        <name>NADP(+)</name>
        <dbReference type="ChEBI" id="CHEBI:58349"/>
    </ligand>
</feature>
<name>FABG_RICBR</name>
<keyword id="KW-0275">Fatty acid biosynthesis</keyword>
<keyword id="KW-0276">Fatty acid metabolism</keyword>
<keyword id="KW-0444">Lipid biosynthesis</keyword>
<keyword id="KW-0443">Lipid metabolism</keyword>
<keyword id="KW-0521">NADP</keyword>
<keyword id="KW-0560">Oxidoreductase</keyword>
<accession>Q1RKB7</accession>
<evidence type="ECO:0000250" key="1"/>
<evidence type="ECO:0000255" key="2">
    <source>
        <dbReference type="PROSITE-ProRule" id="PRU10001"/>
    </source>
</evidence>
<evidence type="ECO:0000305" key="3"/>
<proteinExistence type="inferred from homology"/>
<reference key="1">
    <citation type="journal article" date="2006" name="PLoS Genet.">
        <title>Genome sequence of Rickettsia bellii illuminates the role of amoebae in gene exchanges between intracellular pathogens.</title>
        <authorList>
            <person name="Ogata H."/>
            <person name="La Scola B."/>
            <person name="Audic S."/>
            <person name="Renesto P."/>
            <person name="Blanc G."/>
            <person name="Robert C."/>
            <person name="Fournier P.-E."/>
            <person name="Claverie J.-M."/>
            <person name="Raoult D."/>
        </authorList>
    </citation>
    <scope>NUCLEOTIDE SEQUENCE [LARGE SCALE GENOMIC DNA]</scope>
    <source>
        <strain>RML369-C</strain>
    </source>
</reference>
<sequence length="241" mass="25810">MIDLSGQTALITGASGGIGGAIARQLHKLGSHVIISGSNEEKLKALGNDLKDNYTIKVCNLTNTEECSNLVAQIEKLDILVCNAGITKDTLAIRMKNEDFDQVIDINLKANFILNREAIKKMMTNRYGRIINITSIVGVSGNPGQANYCASKAGLIGMTKSLAYEVATRGITVNAVAPGFIKSDMTDKLNDEQKEAITRKIPKGTYGMPEDIANAVAFLASKQSSYITGQTLHVNGGMLMV</sequence>
<protein>
    <recommendedName>
        <fullName>3-oxoacyl-[acyl-carrier-protein] reductase FabG</fullName>
        <ecNumber>1.1.1.100</ecNumber>
    </recommendedName>
    <alternativeName>
        <fullName>3-ketoacyl-acyl carrier protein reductase</fullName>
    </alternativeName>
    <alternativeName>
        <fullName>Beta-Ketoacyl-acyl carrier protein reductase</fullName>
    </alternativeName>
    <alternativeName>
        <fullName>Beta-ketoacyl-ACP reductase</fullName>
    </alternativeName>
</protein>
<organism>
    <name type="scientific">Rickettsia bellii (strain RML369-C)</name>
    <dbReference type="NCBI Taxonomy" id="336407"/>
    <lineage>
        <taxon>Bacteria</taxon>
        <taxon>Pseudomonadati</taxon>
        <taxon>Pseudomonadota</taxon>
        <taxon>Alphaproteobacteria</taxon>
        <taxon>Rickettsiales</taxon>
        <taxon>Rickettsiaceae</taxon>
        <taxon>Rickettsieae</taxon>
        <taxon>Rickettsia</taxon>
        <taxon>belli group</taxon>
    </lineage>
</organism>
<dbReference type="EC" id="1.1.1.100"/>
<dbReference type="EMBL" id="CP000087">
    <property type="protein sequence ID" value="ABE04197.1"/>
    <property type="molecule type" value="Genomic_DNA"/>
</dbReference>
<dbReference type="RefSeq" id="WP_011476812.1">
    <property type="nucleotide sequence ID" value="NC_007940.1"/>
</dbReference>
<dbReference type="SMR" id="Q1RKB7"/>
<dbReference type="KEGG" id="rbe:RBE_0116"/>
<dbReference type="eggNOG" id="COG1028">
    <property type="taxonomic scope" value="Bacteria"/>
</dbReference>
<dbReference type="HOGENOM" id="CLU_010194_1_3_5"/>
<dbReference type="OrthoDB" id="9804774at2"/>
<dbReference type="UniPathway" id="UPA00094"/>
<dbReference type="Proteomes" id="UP000001951">
    <property type="component" value="Chromosome"/>
</dbReference>
<dbReference type="GO" id="GO:0004316">
    <property type="term" value="F:3-oxoacyl-[acyl-carrier-protein] reductase (NADPH) activity"/>
    <property type="evidence" value="ECO:0000250"/>
    <property type="project" value="UniProtKB"/>
</dbReference>
<dbReference type="GO" id="GO:0051287">
    <property type="term" value="F:NAD binding"/>
    <property type="evidence" value="ECO:0007669"/>
    <property type="project" value="InterPro"/>
</dbReference>
<dbReference type="GO" id="GO:0050661">
    <property type="term" value="F:NADP binding"/>
    <property type="evidence" value="ECO:0000250"/>
    <property type="project" value="UniProtKB"/>
</dbReference>
<dbReference type="GO" id="GO:0030497">
    <property type="term" value="P:fatty acid elongation"/>
    <property type="evidence" value="ECO:0000250"/>
    <property type="project" value="UniProtKB"/>
</dbReference>
<dbReference type="CDD" id="cd05333">
    <property type="entry name" value="BKR_SDR_c"/>
    <property type="match status" value="1"/>
</dbReference>
<dbReference type="FunFam" id="3.40.50.720:FF:000806">
    <property type="entry name" value="3-oxoacyl-[acyl-carrier-protein] reductase FabG"/>
    <property type="match status" value="1"/>
</dbReference>
<dbReference type="Gene3D" id="3.40.50.720">
    <property type="entry name" value="NAD(P)-binding Rossmann-like Domain"/>
    <property type="match status" value="1"/>
</dbReference>
<dbReference type="InterPro" id="IPR011284">
    <property type="entry name" value="3oxo_ACP_reduc"/>
</dbReference>
<dbReference type="InterPro" id="IPR036291">
    <property type="entry name" value="NAD(P)-bd_dom_sf"/>
</dbReference>
<dbReference type="InterPro" id="IPR020904">
    <property type="entry name" value="Sc_DH/Rdtase_CS"/>
</dbReference>
<dbReference type="InterPro" id="IPR050259">
    <property type="entry name" value="SDR"/>
</dbReference>
<dbReference type="InterPro" id="IPR002347">
    <property type="entry name" value="SDR_fam"/>
</dbReference>
<dbReference type="NCBIfam" id="TIGR01830">
    <property type="entry name" value="3oxo_ACP_reduc"/>
    <property type="match status" value="1"/>
</dbReference>
<dbReference type="NCBIfam" id="NF004199">
    <property type="entry name" value="PRK05653.1-4"/>
    <property type="match status" value="1"/>
</dbReference>
<dbReference type="NCBIfam" id="NF005559">
    <property type="entry name" value="PRK07231.1"/>
    <property type="match status" value="1"/>
</dbReference>
<dbReference type="NCBIfam" id="NF009466">
    <property type="entry name" value="PRK12826.1-2"/>
    <property type="match status" value="1"/>
</dbReference>
<dbReference type="PANTHER" id="PTHR42879">
    <property type="entry name" value="3-OXOACYL-(ACYL-CARRIER-PROTEIN) REDUCTASE"/>
    <property type="match status" value="1"/>
</dbReference>
<dbReference type="PANTHER" id="PTHR42879:SF2">
    <property type="entry name" value="3-OXOACYL-[ACYL-CARRIER-PROTEIN] REDUCTASE FABG"/>
    <property type="match status" value="1"/>
</dbReference>
<dbReference type="Pfam" id="PF13561">
    <property type="entry name" value="adh_short_C2"/>
    <property type="match status" value="1"/>
</dbReference>
<dbReference type="PRINTS" id="PR00081">
    <property type="entry name" value="GDHRDH"/>
</dbReference>
<dbReference type="PRINTS" id="PR00080">
    <property type="entry name" value="SDRFAMILY"/>
</dbReference>
<dbReference type="SMART" id="SM00822">
    <property type="entry name" value="PKS_KR"/>
    <property type="match status" value="1"/>
</dbReference>
<dbReference type="SUPFAM" id="SSF51735">
    <property type="entry name" value="NAD(P)-binding Rossmann-fold domains"/>
    <property type="match status" value="1"/>
</dbReference>
<dbReference type="PROSITE" id="PS00061">
    <property type="entry name" value="ADH_SHORT"/>
    <property type="match status" value="1"/>
</dbReference>
<comment type="function">
    <text evidence="1">Catalyzes the NADPH-dependent reduction of beta-ketoacyl-ACP substrates to beta-hydroxyacyl-ACP products, the first reductive step in the elongation cycle of fatty acid biosynthesis.</text>
</comment>
<comment type="catalytic activity">
    <reaction>
        <text>a (3R)-hydroxyacyl-[ACP] + NADP(+) = a 3-oxoacyl-[ACP] + NADPH + H(+)</text>
        <dbReference type="Rhea" id="RHEA:17397"/>
        <dbReference type="Rhea" id="RHEA-COMP:9916"/>
        <dbReference type="Rhea" id="RHEA-COMP:9945"/>
        <dbReference type="ChEBI" id="CHEBI:15378"/>
        <dbReference type="ChEBI" id="CHEBI:57783"/>
        <dbReference type="ChEBI" id="CHEBI:58349"/>
        <dbReference type="ChEBI" id="CHEBI:78776"/>
        <dbReference type="ChEBI" id="CHEBI:78827"/>
        <dbReference type="EC" id="1.1.1.100"/>
    </reaction>
</comment>
<comment type="pathway">
    <text>Lipid metabolism; fatty acid biosynthesis.</text>
</comment>
<comment type="subunit">
    <text evidence="1">Homotetramer.</text>
</comment>
<comment type="similarity">
    <text evidence="3">Belongs to the short-chain dehydrogenases/reductases (SDR) family.</text>
</comment>